<comment type="function">
    <text evidence="1">One of the essential components for the initiation of protein synthesis. Stabilizes the binding of IF-2 and IF-3 on the 30S subunit to which N-formylmethionyl-tRNA(fMet) subsequently binds. Helps modulate mRNA selection, yielding the 30S pre-initiation complex (PIC). Upon addition of the 50S ribosomal subunit IF-1, IF-2 and IF-3 are released leaving the mature 70S translation initiation complex.</text>
</comment>
<comment type="subunit">
    <text evidence="1">Component of the 30S ribosomal translation pre-initiation complex which assembles on the 30S ribosome in the order IF-2 and IF-3, IF-1 and N-formylmethionyl-tRNA(fMet); mRNA recruitment can occur at any time during PIC assembly.</text>
</comment>
<comment type="subcellular location">
    <subcellularLocation>
        <location evidence="1">Cytoplasm</location>
    </subcellularLocation>
</comment>
<comment type="similarity">
    <text evidence="1">Belongs to the IF-1 family.</text>
</comment>
<name>IF1_SHEPC</name>
<accession>A4Y7L4</accession>
<keyword id="KW-0963">Cytoplasm</keyword>
<keyword id="KW-0396">Initiation factor</keyword>
<keyword id="KW-0648">Protein biosynthesis</keyword>
<keyword id="KW-0694">RNA-binding</keyword>
<keyword id="KW-0699">rRNA-binding</keyword>
<feature type="chain" id="PRO_0000338921" description="Translation initiation factor IF-1">
    <location>
        <begin position="1"/>
        <end position="72"/>
    </location>
</feature>
<feature type="domain" description="S1-like" evidence="1">
    <location>
        <begin position="1"/>
        <end position="72"/>
    </location>
</feature>
<evidence type="ECO:0000255" key="1">
    <source>
        <dbReference type="HAMAP-Rule" id="MF_00075"/>
    </source>
</evidence>
<gene>
    <name evidence="1" type="primary">infA</name>
    <name type="ordered locus">Sputcn32_2226</name>
</gene>
<reference key="1">
    <citation type="submission" date="2007-04" db="EMBL/GenBank/DDBJ databases">
        <title>Complete sequence of Shewanella putrefaciens CN-32.</title>
        <authorList>
            <consortium name="US DOE Joint Genome Institute"/>
            <person name="Copeland A."/>
            <person name="Lucas S."/>
            <person name="Lapidus A."/>
            <person name="Barry K."/>
            <person name="Detter J.C."/>
            <person name="Glavina del Rio T."/>
            <person name="Hammon N."/>
            <person name="Israni S."/>
            <person name="Dalin E."/>
            <person name="Tice H."/>
            <person name="Pitluck S."/>
            <person name="Chain P."/>
            <person name="Malfatti S."/>
            <person name="Shin M."/>
            <person name="Vergez L."/>
            <person name="Schmutz J."/>
            <person name="Larimer F."/>
            <person name="Land M."/>
            <person name="Hauser L."/>
            <person name="Kyrpides N."/>
            <person name="Mikhailova N."/>
            <person name="Romine M.F."/>
            <person name="Fredrickson J."/>
            <person name="Tiedje J."/>
            <person name="Richardson P."/>
        </authorList>
    </citation>
    <scope>NUCLEOTIDE SEQUENCE [LARGE SCALE GENOMIC DNA]</scope>
    <source>
        <strain>CN-32 / ATCC BAA-453</strain>
    </source>
</reference>
<organism>
    <name type="scientific">Shewanella putrefaciens (strain CN-32 / ATCC BAA-453)</name>
    <dbReference type="NCBI Taxonomy" id="319224"/>
    <lineage>
        <taxon>Bacteria</taxon>
        <taxon>Pseudomonadati</taxon>
        <taxon>Pseudomonadota</taxon>
        <taxon>Gammaproteobacteria</taxon>
        <taxon>Alteromonadales</taxon>
        <taxon>Shewanellaceae</taxon>
        <taxon>Shewanella</taxon>
    </lineage>
</organism>
<dbReference type="EMBL" id="CP000681">
    <property type="protein sequence ID" value="ABP75947.1"/>
    <property type="molecule type" value="Genomic_DNA"/>
</dbReference>
<dbReference type="SMR" id="A4Y7L4"/>
<dbReference type="STRING" id="319224.Sputcn32_2226"/>
<dbReference type="KEGG" id="spc:Sputcn32_2226"/>
<dbReference type="eggNOG" id="COG0361">
    <property type="taxonomic scope" value="Bacteria"/>
</dbReference>
<dbReference type="HOGENOM" id="CLU_151267_1_0_6"/>
<dbReference type="GO" id="GO:0005829">
    <property type="term" value="C:cytosol"/>
    <property type="evidence" value="ECO:0007669"/>
    <property type="project" value="TreeGrafter"/>
</dbReference>
<dbReference type="GO" id="GO:0043022">
    <property type="term" value="F:ribosome binding"/>
    <property type="evidence" value="ECO:0007669"/>
    <property type="project" value="UniProtKB-UniRule"/>
</dbReference>
<dbReference type="GO" id="GO:0019843">
    <property type="term" value="F:rRNA binding"/>
    <property type="evidence" value="ECO:0007669"/>
    <property type="project" value="UniProtKB-UniRule"/>
</dbReference>
<dbReference type="GO" id="GO:0003743">
    <property type="term" value="F:translation initiation factor activity"/>
    <property type="evidence" value="ECO:0007669"/>
    <property type="project" value="UniProtKB-UniRule"/>
</dbReference>
<dbReference type="CDD" id="cd04451">
    <property type="entry name" value="S1_IF1"/>
    <property type="match status" value="1"/>
</dbReference>
<dbReference type="FunFam" id="2.40.50.140:FF:000002">
    <property type="entry name" value="Translation initiation factor IF-1"/>
    <property type="match status" value="1"/>
</dbReference>
<dbReference type="Gene3D" id="2.40.50.140">
    <property type="entry name" value="Nucleic acid-binding proteins"/>
    <property type="match status" value="1"/>
</dbReference>
<dbReference type="HAMAP" id="MF_00075">
    <property type="entry name" value="IF_1"/>
    <property type="match status" value="1"/>
</dbReference>
<dbReference type="InterPro" id="IPR012340">
    <property type="entry name" value="NA-bd_OB-fold"/>
</dbReference>
<dbReference type="InterPro" id="IPR006196">
    <property type="entry name" value="RNA-binding_domain_S1_IF1"/>
</dbReference>
<dbReference type="InterPro" id="IPR003029">
    <property type="entry name" value="S1_domain"/>
</dbReference>
<dbReference type="InterPro" id="IPR004368">
    <property type="entry name" value="TIF_IF1"/>
</dbReference>
<dbReference type="NCBIfam" id="TIGR00008">
    <property type="entry name" value="infA"/>
    <property type="match status" value="1"/>
</dbReference>
<dbReference type="PANTHER" id="PTHR33370">
    <property type="entry name" value="TRANSLATION INITIATION FACTOR IF-1, CHLOROPLASTIC"/>
    <property type="match status" value="1"/>
</dbReference>
<dbReference type="PANTHER" id="PTHR33370:SF1">
    <property type="entry name" value="TRANSLATION INITIATION FACTOR IF-1, CHLOROPLASTIC"/>
    <property type="match status" value="1"/>
</dbReference>
<dbReference type="Pfam" id="PF01176">
    <property type="entry name" value="eIF-1a"/>
    <property type="match status" value="1"/>
</dbReference>
<dbReference type="SMART" id="SM00316">
    <property type="entry name" value="S1"/>
    <property type="match status" value="1"/>
</dbReference>
<dbReference type="SUPFAM" id="SSF50249">
    <property type="entry name" value="Nucleic acid-binding proteins"/>
    <property type="match status" value="1"/>
</dbReference>
<dbReference type="PROSITE" id="PS50832">
    <property type="entry name" value="S1_IF1_TYPE"/>
    <property type="match status" value="1"/>
</dbReference>
<protein>
    <recommendedName>
        <fullName evidence="1">Translation initiation factor IF-1</fullName>
    </recommendedName>
</protein>
<proteinExistence type="inferred from homology"/>
<sequence>MAKEDNIEMQGTILETLPNTMFRVELENGHVVIAHISGKMRKNYIRILTGDKVTVQLTPYDLTKGRIVFRAR</sequence>